<gene>
    <name type="primary">Nuak1</name>
    <name type="synonym">Kiaa0537</name>
    <name type="synonym">Omphk1</name>
</gene>
<comment type="function">
    <text evidence="2">Serine/threonine-protein kinase involved in various processes such as cell adhesion, regulation of cell ploidy and senescence, cell proliferation and tumor progression. Phosphorylates ATM, CASP6, LATS1, PPP1R12A and p53/TP53. Acts as a regulator of cellular senescence and cellular ploidy by mediating phosphorylation of 'Ser-464' of LATS1, thereby controlling its stability. Controls cell adhesion by regulating activity of the myosin protein phosphatase 1 (PP1) complex. Acts by mediating phosphorylation of PPP1R12A subunit of myosin PP1: phosphorylated PPP1R12A then interacts with 14-3-3, leading to reduced dephosphorylation of myosin MLC2 by myosin PP1. May be involved in DNA damage response: phosphorylates p53/TP53 at 'Ser-15' and 'Ser-392' and is recruited to the CDKN1A/WAF1 promoter to participate in transcription activation by p53/TP53. May also act as a tumor malignancy-associated factor by promoting tumor invasion and metastasis under regulation and phosphorylation by AKT1. Suppresses Fas-induced apoptosis by mediating phosphorylation of CASP6, thereby suppressing the activation of the caspase and the subsequent cleavage of CFLAR. Regulates UV radiation-induced DNA damage response mediated by CDKN1A. In association with STK11, phosphorylates CDKN1A in response to UV radiation and contributes to its degradation which is necessary for optimal DNA repair.</text>
</comment>
<comment type="catalytic activity">
    <reaction>
        <text>L-seryl-[protein] + ATP = O-phospho-L-seryl-[protein] + ADP + H(+)</text>
        <dbReference type="Rhea" id="RHEA:17989"/>
        <dbReference type="Rhea" id="RHEA-COMP:9863"/>
        <dbReference type="Rhea" id="RHEA-COMP:11604"/>
        <dbReference type="ChEBI" id="CHEBI:15378"/>
        <dbReference type="ChEBI" id="CHEBI:29999"/>
        <dbReference type="ChEBI" id="CHEBI:30616"/>
        <dbReference type="ChEBI" id="CHEBI:83421"/>
        <dbReference type="ChEBI" id="CHEBI:456216"/>
        <dbReference type="EC" id="2.7.11.1"/>
    </reaction>
</comment>
<comment type="catalytic activity">
    <reaction>
        <text>L-threonyl-[protein] + ATP = O-phospho-L-threonyl-[protein] + ADP + H(+)</text>
        <dbReference type="Rhea" id="RHEA:46608"/>
        <dbReference type="Rhea" id="RHEA-COMP:11060"/>
        <dbReference type="Rhea" id="RHEA-COMP:11605"/>
        <dbReference type="ChEBI" id="CHEBI:15378"/>
        <dbReference type="ChEBI" id="CHEBI:30013"/>
        <dbReference type="ChEBI" id="CHEBI:30616"/>
        <dbReference type="ChEBI" id="CHEBI:61977"/>
        <dbReference type="ChEBI" id="CHEBI:456216"/>
        <dbReference type="EC" id="2.7.11.1"/>
    </reaction>
</comment>
<comment type="cofactor">
    <cofactor evidence="1">
        <name>Mg(2+)</name>
        <dbReference type="ChEBI" id="CHEBI:18420"/>
    </cofactor>
</comment>
<comment type="activity regulation">
    <text evidence="1">Activated by phosphorylation on Thr-212. Activated by phosphorylation at Ser-601 AKT1 during glucose starvation; the relevance of such activation in normal cells is however unsure (By similarity).</text>
</comment>
<comment type="subunit">
    <text evidence="2">Interacts (via GILK motif) with PPP1CB; the interaction is direct and bridges NUAK1 and PPP1R12A. Interacts with CDKN1A.</text>
</comment>
<comment type="subcellular location">
    <subcellularLocation>
        <location evidence="1">Nucleus</location>
    </subcellularLocation>
    <subcellularLocation>
        <location evidence="1">Cytoplasm</location>
    </subcellularLocation>
</comment>
<comment type="tissue specificity">
    <text evidence="6">Expressed in the developing central nervous system, in epidermis, and some other tissues.</text>
</comment>
<comment type="developmental stage">
    <text evidence="6">At 7.5 dpc, expressed in allantois and anterior visceral endoderm. In the embryonic part, present in mesoderm migrating laterally but not in the primitive streak; the expression is not apparent in ectoderm or endoderm at this stage. At 8.5 dpc, no expression is found in mesodermal tissues, while it is expressed in midbrain and isthmic regions of the neuroectoderm; it is also found in the pharyngeal region of the foregut. At 9.5 dpc, the expression is found throughout the undifferentiated neuroectoderm, except the telencephalic region. The expression is also ubiquitous in the epidermis; it is especially apparent in the ventral body wall. Also expressed in dorsal root ganglia of neural crest origin. The expression persists in the anterior gut and is also found in bulb arteriosus, kidney, and several connective tissues. At 12.5 dpc, the expression is greatly reduced in most of the neuroectoderm, but some expression remains in pons, anterior tectum, tegmentum, pretectum, prethalamus, mammillary region and hypothalamus. In telencephalon, expression is present in the differentiating preplate of the cortex. The expression is sustained in the epidermis of the whole body. In 14.5 and 18.5 dpc brain, expressed in differentiated fields of the cortex; no significant expression is found in other parts of brain or in the spinal cord. The expression is also present in a variety of connective tissues and in the epidermis of the whole body.</text>
</comment>
<comment type="domain">
    <text evidence="1">The GILK motif mediates interaction with PPP1CB.</text>
</comment>
<comment type="PTM">
    <text evidence="1">Phosphorylated at Thr-212 by STK11/LKB1 in complex with STE20-related adapter-alpha (STRADA) pseudo kinase and CAB39. Not dephosphorylated by the myosin PP1 complex when regulating its activity, due to the presence of PPP1R12A, which prevents myosin PP1 from dephosphorylating NUAK1. Phosphorylated by STK38L upon stimulation with IGF1 (By similarity).</text>
</comment>
<comment type="PTM">
    <text evidence="1">Ubiquitinated with 'Lys-29'- and 'Lys-33'-linked polyubiquitins which appear to impede LKB1-mediated phosphorylation. Deubiquitinated by USP9X (By similarity).</text>
</comment>
<comment type="disruption phenotype">
    <text evidence="6">Lethal during development, no live-born. At 18.5 dpc, homozygous mutants suffer from omphalocele with a failure in closure of the secondary body wall leading to organs outside of the abdomen. Omphalocele are apparent at 14.5 dpc when the physiological hernia is almost rectified in wild-type embryos.</text>
</comment>
<comment type="similarity">
    <text evidence="7">Belongs to the protein kinase superfamily. CAMK Ser/Thr protein kinase family. SNF1 subfamily.</text>
</comment>
<reference key="1">
    <citation type="journal article" date="2004" name="Genome Res.">
        <title>The status, quality, and expansion of the NIH full-length cDNA project: the Mammalian Gene Collection (MGC).</title>
        <authorList>
            <consortium name="The MGC Project Team"/>
        </authorList>
    </citation>
    <scope>NUCLEOTIDE SEQUENCE [LARGE SCALE MRNA]</scope>
    <source>
        <strain>C57BL/6J</strain>
        <strain>FVB/N</strain>
        <tissue>Brain</tissue>
        <tissue>Salivary gland</tissue>
    </source>
</reference>
<reference key="2">
    <citation type="journal article" date="2003" name="DNA Res.">
        <title>Prediction of the coding sequences of mouse homologues of KIAA gene: III. The complete nucleotide sequences of 500 mouse KIAA-homologous cDNAs identified by screening of terminal sequences of cDNA clones randomly sampled from size-fractionated libraries.</title>
        <authorList>
            <person name="Okazaki N."/>
            <person name="Kikuno R."/>
            <person name="Ohara R."/>
            <person name="Inamoto S."/>
            <person name="Koseki H."/>
            <person name="Hiraoka S."/>
            <person name="Saga Y."/>
            <person name="Nagase T."/>
            <person name="Ohara O."/>
            <person name="Koga H."/>
        </authorList>
    </citation>
    <scope>NUCLEOTIDE SEQUENCE [LARGE SCALE MRNA] OF 84-658</scope>
    <source>
        <tissue>Fetal brain</tissue>
    </source>
</reference>
<reference key="3">
    <citation type="journal article" date="2006" name="Dev. Dyn.">
        <title>A new serine/threonine protein kinase, Omphk1, essential to ventral body wall formation.</title>
        <authorList>
            <person name="Hirano M."/>
            <person name="Kiyonari H."/>
            <person name="Inoue A."/>
            <person name="Furushima K."/>
            <person name="Murata T."/>
            <person name="Suda Y."/>
            <person name="Aizawa S."/>
        </authorList>
    </citation>
    <scope>DISRUPTION PHENOTYPE</scope>
    <scope>TISSUE SPECIFICITY</scope>
    <scope>DEVELOPMENTAL STAGE</scope>
</reference>
<reference key="4">
    <citation type="journal article" date="2010" name="Cell">
        <title>A tissue-specific atlas of mouse protein phosphorylation and expression.</title>
        <authorList>
            <person name="Huttlin E.L."/>
            <person name="Jedrychowski M.P."/>
            <person name="Elias J.E."/>
            <person name="Goswami T."/>
            <person name="Rad R."/>
            <person name="Beausoleil S.A."/>
            <person name="Villen J."/>
            <person name="Haas W."/>
            <person name="Sowa M.E."/>
            <person name="Gygi S.P."/>
        </authorList>
    </citation>
    <scope>IDENTIFICATION BY MASS SPECTROMETRY [LARGE SCALE ANALYSIS]</scope>
    <source>
        <tissue>Brain</tissue>
        <tissue>Brown adipose tissue</tissue>
    </source>
</reference>
<protein>
    <recommendedName>
        <fullName>NUAK family SNF1-like kinase 1</fullName>
        <ecNumber>2.7.11.1</ecNumber>
    </recommendedName>
    <alternativeName>
        <fullName>AMPK-related protein kinase 5</fullName>
    </alternativeName>
    <alternativeName>
        <fullName>Omphalocele kinase 1</fullName>
    </alternativeName>
</protein>
<organism>
    <name type="scientific">Mus musculus</name>
    <name type="common">Mouse</name>
    <dbReference type="NCBI Taxonomy" id="10090"/>
    <lineage>
        <taxon>Eukaryota</taxon>
        <taxon>Metazoa</taxon>
        <taxon>Chordata</taxon>
        <taxon>Craniata</taxon>
        <taxon>Vertebrata</taxon>
        <taxon>Euteleostomi</taxon>
        <taxon>Mammalia</taxon>
        <taxon>Eutheria</taxon>
        <taxon>Euarchontoglires</taxon>
        <taxon>Glires</taxon>
        <taxon>Rodentia</taxon>
        <taxon>Myomorpha</taxon>
        <taxon>Muroidea</taxon>
        <taxon>Muridae</taxon>
        <taxon>Murinae</taxon>
        <taxon>Mus</taxon>
        <taxon>Mus</taxon>
    </lineage>
</organism>
<dbReference type="EC" id="2.7.11.1"/>
<dbReference type="EMBL" id="BC040467">
    <property type="protein sequence ID" value="AAH40467.1"/>
    <property type="molecule type" value="mRNA"/>
</dbReference>
<dbReference type="EMBL" id="BC082328">
    <property type="protein sequence ID" value="AAH82328.1"/>
    <property type="molecule type" value="mRNA"/>
</dbReference>
<dbReference type="EMBL" id="AB182364">
    <property type="protein sequence ID" value="BAD23995.1"/>
    <property type="molecule type" value="mRNA"/>
</dbReference>
<dbReference type="CCDS" id="CCDS24079.1"/>
<dbReference type="RefSeq" id="NP_001004363.1">
    <property type="nucleotide sequence ID" value="NM_001004363.2"/>
</dbReference>
<dbReference type="SMR" id="Q641K5"/>
<dbReference type="BioGRID" id="219063">
    <property type="interactions" value="1"/>
</dbReference>
<dbReference type="FunCoup" id="Q641K5">
    <property type="interactions" value="1268"/>
</dbReference>
<dbReference type="STRING" id="10090.ENSMUSP00000020220"/>
<dbReference type="iPTMnet" id="Q641K5"/>
<dbReference type="PhosphoSitePlus" id="Q641K5"/>
<dbReference type="PaxDb" id="10090-ENSMUSP00000020220"/>
<dbReference type="ProteomicsDB" id="252864"/>
<dbReference type="Antibodypedia" id="30646">
    <property type="antibodies" value="315 antibodies from 35 providers"/>
</dbReference>
<dbReference type="DNASU" id="77976"/>
<dbReference type="Ensembl" id="ENSMUST00000020220.15">
    <property type="protein sequence ID" value="ENSMUSP00000020220.9"/>
    <property type="gene ID" value="ENSMUSG00000020032.15"/>
</dbReference>
<dbReference type="GeneID" id="77976"/>
<dbReference type="KEGG" id="mmu:77976"/>
<dbReference type="UCSC" id="uc007gko.1">
    <property type="organism name" value="mouse"/>
</dbReference>
<dbReference type="AGR" id="MGI:1925226"/>
<dbReference type="CTD" id="9891"/>
<dbReference type="MGI" id="MGI:1925226">
    <property type="gene designation" value="Nuak1"/>
</dbReference>
<dbReference type="VEuPathDB" id="HostDB:ENSMUSG00000020032"/>
<dbReference type="eggNOG" id="KOG0611">
    <property type="taxonomic scope" value="Eukaryota"/>
</dbReference>
<dbReference type="GeneTree" id="ENSGT00940000157255"/>
<dbReference type="HOGENOM" id="CLU_000288_63_42_1"/>
<dbReference type="InParanoid" id="Q641K5"/>
<dbReference type="OMA" id="HCGAEDK"/>
<dbReference type="OrthoDB" id="193931at2759"/>
<dbReference type="PhylomeDB" id="Q641K5"/>
<dbReference type="TreeFam" id="TF324572"/>
<dbReference type="Reactome" id="R-MMU-6804756">
    <property type="pathway name" value="Regulation of TP53 Activity through Phosphorylation"/>
</dbReference>
<dbReference type="BioGRID-ORCS" id="77976">
    <property type="hits" value="1 hit in 81 CRISPR screens"/>
</dbReference>
<dbReference type="ChiTaRS" id="Nuak1">
    <property type="organism name" value="mouse"/>
</dbReference>
<dbReference type="PRO" id="PR:Q641K5"/>
<dbReference type="Proteomes" id="UP000000589">
    <property type="component" value="Chromosome 10"/>
</dbReference>
<dbReference type="RNAct" id="Q641K5">
    <property type="molecule type" value="protein"/>
</dbReference>
<dbReference type="Bgee" id="ENSMUSG00000020032">
    <property type="expression patterns" value="Expressed in interventricular septum and 241 other cell types or tissues"/>
</dbReference>
<dbReference type="ExpressionAtlas" id="Q641K5">
    <property type="expression patterns" value="baseline and differential"/>
</dbReference>
<dbReference type="GO" id="GO:0005737">
    <property type="term" value="C:cytoplasm"/>
    <property type="evidence" value="ECO:0000250"/>
    <property type="project" value="UniProtKB"/>
</dbReference>
<dbReference type="GO" id="GO:0001650">
    <property type="term" value="C:fibrillar center"/>
    <property type="evidence" value="ECO:0007669"/>
    <property type="project" value="Ensembl"/>
</dbReference>
<dbReference type="GO" id="GO:0015630">
    <property type="term" value="C:microtubule cytoskeleton"/>
    <property type="evidence" value="ECO:0007669"/>
    <property type="project" value="Ensembl"/>
</dbReference>
<dbReference type="GO" id="GO:0005654">
    <property type="term" value="C:nucleoplasm"/>
    <property type="evidence" value="ECO:0007669"/>
    <property type="project" value="Ensembl"/>
</dbReference>
<dbReference type="GO" id="GO:0005634">
    <property type="term" value="C:nucleus"/>
    <property type="evidence" value="ECO:0000250"/>
    <property type="project" value="UniProtKB"/>
</dbReference>
<dbReference type="GO" id="GO:0005524">
    <property type="term" value="F:ATP binding"/>
    <property type="evidence" value="ECO:0007669"/>
    <property type="project" value="UniProtKB-KW"/>
</dbReference>
<dbReference type="GO" id="GO:0002039">
    <property type="term" value="F:p53 binding"/>
    <property type="evidence" value="ECO:0007669"/>
    <property type="project" value="Ensembl"/>
</dbReference>
<dbReference type="GO" id="GO:0106310">
    <property type="term" value="F:protein serine kinase activity"/>
    <property type="evidence" value="ECO:0007669"/>
    <property type="project" value="RHEA"/>
</dbReference>
<dbReference type="GO" id="GO:0004674">
    <property type="term" value="F:protein serine/threonine kinase activity"/>
    <property type="evidence" value="ECO:0000250"/>
    <property type="project" value="UniProtKB"/>
</dbReference>
<dbReference type="GO" id="GO:0007155">
    <property type="term" value="P:cell adhesion"/>
    <property type="evidence" value="ECO:0007669"/>
    <property type="project" value="UniProtKB-KW"/>
</dbReference>
<dbReference type="GO" id="GO:0006974">
    <property type="term" value="P:DNA damage response"/>
    <property type="evidence" value="ECO:0007669"/>
    <property type="project" value="UniProtKB-KW"/>
</dbReference>
<dbReference type="GO" id="GO:0006468">
    <property type="term" value="P:protein phosphorylation"/>
    <property type="evidence" value="ECO:0000250"/>
    <property type="project" value="UniProtKB"/>
</dbReference>
<dbReference type="GO" id="GO:0030155">
    <property type="term" value="P:regulation of cell adhesion"/>
    <property type="evidence" value="ECO:0000250"/>
    <property type="project" value="UniProtKB"/>
</dbReference>
<dbReference type="GO" id="GO:2000772">
    <property type="term" value="P:regulation of cellular senescence"/>
    <property type="evidence" value="ECO:0000250"/>
    <property type="project" value="UniProtKB"/>
</dbReference>
<dbReference type="CDD" id="cd14073">
    <property type="entry name" value="STKc_NUAK"/>
    <property type="match status" value="1"/>
</dbReference>
<dbReference type="FunFam" id="3.30.200.20:FF:000042">
    <property type="entry name" value="Aurora kinase A"/>
    <property type="match status" value="1"/>
</dbReference>
<dbReference type="FunFam" id="1.10.510.10:FF:000226">
    <property type="entry name" value="NUAK family SNF1-like kinase 1"/>
    <property type="match status" value="1"/>
</dbReference>
<dbReference type="Gene3D" id="1.10.510.10">
    <property type="entry name" value="Transferase(Phosphotransferase) domain 1"/>
    <property type="match status" value="1"/>
</dbReference>
<dbReference type="InterPro" id="IPR011009">
    <property type="entry name" value="Kinase-like_dom_sf"/>
</dbReference>
<dbReference type="InterPro" id="IPR000719">
    <property type="entry name" value="Prot_kinase_dom"/>
</dbReference>
<dbReference type="InterPro" id="IPR017441">
    <property type="entry name" value="Protein_kinase_ATP_BS"/>
</dbReference>
<dbReference type="InterPro" id="IPR008271">
    <property type="entry name" value="Ser/Thr_kinase_AS"/>
</dbReference>
<dbReference type="PANTHER" id="PTHR24346">
    <property type="entry name" value="MAP/MICROTUBULE AFFINITY-REGULATING KINASE"/>
    <property type="match status" value="1"/>
</dbReference>
<dbReference type="PANTHER" id="PTHR24346:SF86">
    <property type="entry name" value="NUAK FAMILY SNF1-LIKE KINASE 1"/>
    <property type="match status" value="1"/>
</dbReference>
<dbReference type="Pfam" id="PF00069">
    <property type="entry name" value="Pkinase"/>
    <property type="match status" value="1"/>
</dbReference>
<dbReference type="SMART" id="SM00220">
    <property type="entry name" value="S_TKc"/>
    <property type="match status" value="1"/>
</dbReference>
<dbReference type="SUPFAM" id="SSF56112">
    <property type="entry name" value="Protein kinase-like (PK-like)"/>
    <property type="match status" value="1"/>
</dbReference>
<dbReference type="PROSITE" id="PS00107">
    <property type="entry name" value="PROTEIN_KINASE_ATP"/>
    <property type="match status" value="1"/>
</dbReference>
<dbReference type="PROSITE" id="PS50011">
    <property type="entry name" value="PROTEIN_KINASE_DOM"/>
    <property type="match status" value="1"/>
</dbReference>
<dbReference type="PROSITE" id="PS00108">
    <property type="entry name" value="PROTEIN_KINASE_ST"/>
    <property type="match status" value="1"/>
</dbReference>
<proteinExistence type="evidence at protein level"/>
<feature type="chain" id="PRO_0000086454" description="NUAK family SNF1-like kinase 1">
    <location>
        <begin position="1"/>
        <end position="658"/>
    </location>
</feature>
<feature type="domain" description="Protein kinase" evidence="3">
    <location>
        <begin position="56"/>
        <end position="307"/>
    </location>
</feature>
<feature type="region of interest" description="Disordered" evidence="5">
    <location>
        <begin position="1"/>
        <end position="53"/>
    </location>
</feature>
<feature type="region of interest" description="Disordered" evidence="5">
    <location>
        <begin position="353"/>
        <end position="422"/>
    </location>
</feature>
<feature type="region of interest" description="Disordered" evidence="5">
    <location>
        <begin position="441"/>
        <end position="568"/>
    </location>
</feature>
<feature type="short sequence motif" description="GILK motif">
    <location>
        <begin position="400"/>
        <end position="403"/>
    </location>
</feature>
<feature type="compositionally biased region" description="Basic residues" evidence="5">
    <location>
        <begin position="40"/>
        <end position="53"/>
    </location>
</feature>
<feature type="compositionally biased region" description="Polar residues" evidence="5">
    <location>
        <begin position="378"/>
        <end position="393"/>
    </location>
</feature>
<feature type="compositionally biased region" description="Basic residues" evidence="5">
    <location>
        <begin position="394"/>
        <end position="405"/>
    </location>
</feature>
<feature type="compositionally biased region" description="Basic residues" evidence="5">
    <location>
        <begin position="519"/>
        <end position="530"/>
    </location>
</feature>
<feature type="compositionally biased region" description="Low complexity" evidence="5">
    <location>
        <begin position="559"/>
        <end position="568"/>
    </location>
</feature>
<feature type="active site" description="Proton acceptor" evidence="3 4">
    <location>
        <position position="179"/>
    </location>
</feature>
<feature type="binding site" evidence="3">
    <location>
        <begin position="62"/>
        <end position="70"/>
    </location>
    <ligand>
        <name>ATP</name>
        <dbReference type="ChEBI" id="CHEBI:30616"/>
    </ligand>
</feature>
<feature type="binding site" evidence="3">
    <location>
        <position position="85"/>
    </location>
    <ligand>
        <name>ATP</name>
        <dbReference type="ChEBI" id="CHEBI:30616"/>
    </ligand>
</feature>
<feature type="modified residue" description="N-acetylmethionine" evidence="2">
    <location>
        <position position="1"/>
    </location>
</feature>
<feature type="modified residue" description="Phosphoserine" evidence="2">
    <location>
        <position position="22"/>
    </location>
</feature>
<feature type="modified residue" description="Phosphothreonine; by LKB1" evidence="2">
    <location>
        <position position="212"/>
    </location>
</feature>
<feature type="modified residue" description="Phosphoserine" evidence="2">
    <location>
        <position position="456"/>
    </location>
</feature>
<feature type="modified residue" description="Phosphoserine; by PKB/AKT1" evidence="2">
    <location>
        <position position="601"/>
    </location>
</feature>
<accession>Q641K5</accession>
<accession>Q6I6D6</accession>
<accession>Q8CGE1</accession>
<evidence type="ECO:0000250" key="1"/>
<evidence type="ECO:0000250" key="2">
    <source>
        <dbReference type="UniProtKB" id="O60285"/>
    </source>
</evidence>
<evidence type="ECO:0000255" key="3">
    <source>
        <dbReference type="PROSITE-ProRule" id="PRU00159"/>
    </source>
</evidence>
<evidence type="ECO:0000255" key="4">
    <source>
        <dbReference type="PROSITE-ProRule" id="PRU10027"/>
    </source>
</evidence>
<evidence type="ECO:0000256" key="5">
    <source>
        <dbReference type="SAM" id="MobiDB-lite"/>
    </source>
</evidence>
<evidence type="ECO:0000269" key="6">
    <source>
    </source>
</evidence>
<evidence type="ECO:0000305" key="7"/>
<sequence length="658" mass="73661">MEGAAVSAAGDGPAVETGLPGSPLEAVAGATAAPVEPRKPHGVKRHHHKHNLKHRYELQETLGKGTYGKVKRATERFSGRVVAIKSIRKDKIKDELDMVHIRREIEIMSSLNHPHIISIYEVFENKDKIVIIMEYASKGELYDYISERRRLSERETRHFFRQIVSAVHYCHKNGVVHRDLKLENILLDDNCNIKIADFGLSNLYQKDKFLQTFCGSPLYASPEIVNGRPYRGPEVDSWALGVLLYTLIYGTMPFDGFDHKNLIRQISSGEYREPTQPSDARGLIRWMLMVNPDRRATIEDIANHWWVNWGYKSSVCDCDALPDSESPLLARIIDWHHRSTGLQAEAEAKMKGLAKPGASEVVLERQRSLKKSKKENDFPQSGQDSVPESPSKLSSKRPKGILKKRSNSEHRSHSTGFIEGIVSPALPSPFKMEQDLCRTAIPLPSSPEADMSGKLSLKQSATMPKKGILKKTQQRESGYYSSPERSESSELLDSNDVVISGGLSSPPPDPARGTSHSLSCRRKGILKHSSRYSDGGTDPALTRPEMPTLESLSPPGVPSDGISRSYSRPSSIISDDSVLSSDSFDLLELQENRPARQRIRSCVSAENFLQLQDFETPHNRPRPQYLKRLADSSFSLLTDMDDVTQVYKKALEICSKLN</sequence>
<name>NUAK1_MOUSE</name>
<keyword id="KW-0007">Acetylation</keyword>
<keyword id="KW-0067">ATP-binding</keyword>
<keyword id="KW-0130">Cell adhesion</keyword>
<keyword id="KW-0963">Cytoplasm</keyword>
<keyword id="KW-0227">DNA damage</keyword>
<keyword id="KW-0418">Kinase</keyword>
<keyword id="KW-0547">Nucleotide-binding</keyword>
<keyword id="KW-0539">Nucleus</keyword>
<keyword id="KW-0597">Phosphoprotein</keyword>
<keyword id="KW-1185">Reference proteome</keyword>
<keyword id="KW-0723">Serine/threonine-protein kinase</keyword>
<keyword id="KW-0808">Transferase</keyword>
<keyword id="KW-0832">Ubl conjugation</keyword>